<sequence length="452" mass="51373">MDDIFTQCREGNAVAVRLWLDNTENDLNQGDDHGFSPLHWACREGRSAVVEMLIMRGARINVMNRGDDTPLHLAASHGHRDIVQKLLQYKADINAVNEHGNVPLHYACFWGQDQVAEDLVANGALVSICNKYGEMPVDKAKAPLRELLRERAEKMGQNLNRIPYKDTFWKGTTRTRPRNGTLNKHSGIDFKQLNFLAKLNENHSGELWKGRWQGNDIVVKVLKVRDWSTRKSRDFNEECPRLRIFSHPNVLPVLGACQAPPAPHPTLITHWMPYGSLYNVLHEGTNFVVDQSQAVKFALDMARGMAFLHTLEPLIPRHALNSRSVMIDEDMTARISMADVKFSFQCPGRMYAPAWVAPEALQKKPEDTNRRSADMWSFAVLLWELVTREVPFADLSNMEIGMKVALEGLRPTIPPGISPHVCKLMKICMNEDPAKRPKFDMIVPILEKMQDK</sequence>
<feature type="chain" id="PRO_0000086022" description="Scaffold protein ILK">
    <location>
        <begin position="1"/>
        <end position="452"/>
    </location>
</feature>
<feature type="repeat" description="ANK 1" evidence="2">
    <location>
        <begin position="2"/>
        <end position="30"/>
    </location>
</feature>
<feature type="repeat" description="ANK 2" evidence="2">
    <location>
        <begin position="31"/>
        <end position="63"/>
    </location>
</feature>
<feature type="repeat" description="ANK 3" evidence="2">
    <location>
        <begin position="64"/>
        <end position="96"/>
    </location>
</feature>
<feature type="repeat" description="ANK 4" evidence="2">
    <location>
        <begin position="97"/>
        <end position="129"/>
    </location>
</feature>
<feature type="repeat" description="ANK 5" evidence="2">
    <location>
        <begin position="130"/>
        <end position="174"/>
    </location>
</feature>
<feature type="domain" description="Protein kinase" evidence="4">
    <location>
        <begin position="193"/>
        <end position="446"/>
    </location>
</feature>
<feature type="region of interest" description="Interaction with LIMS1" evidence="2">
    <location>
        <begin position="33"/>
        <end position="139"/>
    </location>
</feature>
<feature type="region of interest" description="PH-like; mediates interaction with TGFB1I1" evidence="5">
    <location>
        <begin position="180"/>
        <end position="212"/>
    </location>
</feature>
<feature type="short sequence motif" description="Nuclear localization signal" evidence="2">
    <location>
        <begin position="363"/>
        <end position="371"/>
    </location>
</feature>
<feature type="binding site" evidence="2">
    <location>
        <position position="200"/>
    </location>
    <ligand>
        <name>ATP</name>
        <dbReference type="ChEBI" id="CHEBI:30616"/>
    </ligand>
</feature>
<feature type="binding site" evidence="2">
    <location>
        <position position="202"/>
    </location>
    <ligand>
        <name>ATP</name>
        <dbReference type="ChEBI" id="CHEBI:30616"/>
    </ligand>
</feature>
<feature type="binding site" evidence="2">
    <location>
        <position position="203"/>
    </location>
    <ligand>
        <name>ATP</name>
        <dbReference type="ChEBI" id="CHEBI:30616"/>
    </ligand>
</feature>
<feature type="binding site" evidence="2">
    <location>
        <position position="204"/>
    </location>
    <ligand>
        <name>ATP</name>
        <dbReference type="ChEBI" id="CHEBI:30616"/>
    </ligand>
</feature>
<feature type="binding site" evidence="2">
    <location>
        <position position="270"/>
    </location>
    <ligand>
        <name>ATP</name>
        <dbReference type="ChEBI" id="CHEBI:30616"/>
    </ligand>
</feature>
<feature type="binding site" evidence="2">
    <location>
        <position position="272"/>
    </location>
    <ligand>
        <name>ATP</name>
        <dbReference type="ChEBI" id="CHEBI:30616"/>
    </ligand>
</feature>
<feature type="binding site" evidence="2">
    <location>
        <position position="279"/>
    </location>
    <ligand>
        <name>ATP</name>
        <dbReference type="ChEBI" id="CHEBI:30616"/>
    </ligand>
</feature>
<feature type="binding site" evidence="2">
    <location>
        <position position="339"/>
    </location>
    <ligand>
        <name>Mg(2+)</name>
        <dbReference type="ChEBI" id="CHEBI:18420"/>
    </ligand>
</feature>
<feature type="binding site" evidence="2">
    <location>
        <position position="341"/>
    </location>
    <ligand>
        <name>ATP</name>
        <dbReference type="ChEBI" id="CHEBI:30616"/>
    </ligand>
</feature>
<feature type="modified residue" description="N-acetylmethionine" evidence="2">
    <location>
        <position position="1"/>
    </location>
</feature>
<feature type="modified residue" description="Phosphothreonine" evidence="2">
    <location>
        <position position="173"/>
    </location>
</feature>
<feature type="modified residue" description="Phosphoserine" evidence="2">
    <location>
        <position position="186"/>
    </location>
</feature>
<feature type="modified residue" description="Phosphoserine" evidence="2">
    <location>
        <position position="246"/>
    </location>
</feature>
<feature type="modified residue" description="N6-acetyllysine" evidence="11">
    <location>
        <position position="426"/>
    </location>
</feature>
<feature type="sequence conflict" description="In Ref. 1; AAB94646." evidence="9" ref="1">
    <original>I</original>
    <variation>T</variation>
    <location>
        <position position="93"/>
    </location>
</feature>
<feature type="sequence conflict" description="In Ref. 1; AAB94646." evidence="9" ref="1">
    <original>I</original>
    <variation>V</variation>
    <location>
        <position position="413"/>
    </location>
</feature>
<accession>O55222</accession>
<accession>Q78KK2</accession>
<comment type="function">
    <text evidence="2 3 8">Scaffold protein which mediates protein-protein interactions during a range of cellular events including focal adhesion assembly, cell adhesion and cell migration (By similarity). Regulates integrin-mediated signal transduction by contributing to inside-out integrin activation (By similarity). Recruits PARVA and LIMS1/PITCH to form the heterotrimeric IPP (ILK-PINCH-PARVIN) complex which binds to F-actin via the C-terminal tail of LIMS1 and the N-terminal region of PARVA, promoting F-actin filament bundling, a process required to generate force for actin cytoskeleton reorganization and subsequent dynamic cell adhesion events such as cell spreading and migration (By similarity). Binding to PARVA promotes effective assembly of ILK into focal adhesions while PARVA-bound ILK can simultaneously engage integrin-beta cytoplasmic tails to mediate cell adhesion (By similarity). Plays a role with PARVG in promoting the cell adhesion and spreading of leukocytes (By similarity). Acts as an upstream effector of both AKT1/PKB and GSK3 (By similarity). Mediates trafficking of caveolae to the cell surface in an ITGB1-dependent manner by promoting the recruitment of IQGAP1 to the cell cortex which cooperates with its effector DIAPH1 to locally stabilize microtubules and allow stable insertion of caveolae into the plasma membrane (PubMed:20951348). Required for the maintenance of mitotic spindle integrity by promoting phosphorylation of TACC3 by AURKA (By similarity). Associates with chromatin and may act as a negative regulator of transcription when located in the nucleus (By similarity).</text>
</comment>
<comment type="subunit">
    <text evidence="2 5 7 8">Component of the heterotrimeric IPP (ILK-PINCH-PARVIN) complex composed of ILK, LIMS1/PINCH and PARVA; the complex binds to F-actin via the C-terminal tail of LIMS1 and the N-terminal region of PARVA, promoting F-actin filament bundling (By similarity). Formation of the IPP complex is dependent on protein kinase C and precedes integrin-mediated cell adhesion and spreading (By similarity). ILK also interacts with LIMS2/PINCH2 and with PARVB and PARVG which may substitute for LIMS1 and PARVA in the IPP complex; PARVA and PARVB compete for the same binding site (By similarity). Interaction with PARVG promotes the establishment of cell polarity required for leukocyte migration (By similarity). Interacts with the cytoplasmic domain of integrin ITGB1 and may also interact with integrins ITGB2, ITGB3 and/or ITGB5 (By similarity). Interacts probably also with TGFB1I1 (PubMed:16737959). Interacts (via ANK repeats) with EPHA1 (via SAM domain); stimulated by EFNA1 but independent of the kinase activity of EPHA1 (By similarity). Interacts with FERMT2 (PubMed:18483218). Interacts with LIMD2; leading to activate the protein kinase activity (By similarity). Interacts with PXN/PAXILLIN (via LD motif 4) (By similarity). Interacts with CCDC25 (via cytoplasmic region); initiating the ILK-PARVB cascade to induce cytoskeleton rearrangement and directional migration of cells (By similarity). Interacts with IQGAP1; the interaction is required for localization of IQGAP1 to the cell cortex (PubMed:20951348).</text>
</comment>
<comment type="interaction">
    <interactant intactId="EBI-6690138">
        <id>O55222</id>
    </interactant>
    <interactant intactId="EBI-6690233">
        <id>Q9EPC1</id>
        <label>Parva</label>
    </interactant>
    <organismsDiffer>false</organismsDiffer>
    <experiments>7</experiments>
</comment>
<comment type="interaction">
    <interactant intactId="EBI-6690138">
        <id>O55222</id>
    </interactant>
    <interactant intactId="EBI-6914996">
        <id>Q9ES46</id>
        <label>Parvb</label>
    </interactant>
    <organismsDiffer>false</organismsDiffer>
    <experiments>3</experiments>
</comment>
<comment type="interaction">
    <interactant intactId="EBI-6690138">
        <id>O55222</id>
    </interactant>
    <interactant intactId="EBI-773027">
        <id>Q9WUD1</id>
        <label>Stub1</label>
    </interactant>
    <organismsDiffer>false</organismsDiffer>
    <experiments>7</experiments>
</comment>
<comment type="interaction">
    <interactant intactId="EBI-6690138">
        <id>O55222</id>
    </interactant>
    <interactant intactId="EBI-306928">
        <id>P48059</id>
        <label>LIMS1</label>
    </interactant>
    <organismsDiffer>true</organismsDiffer>
    <experiments>4</experiments>
</comment>
<comment type="interaction">
    <interactant intactId="EBI-6690138">
        <id>O55222</id>
    </interactant>
    <interactant intactId="EBI-747655">
        <id>Q9NVD7</id>
        <label>PARVA</label>
    </interactant>
    <organismsDiffer>true</organismsDiffer>
    <experiments>2</experiments>
</comment>
<comment type="subcellular location">
    <subcellularLocation>
        <location evidence="6 7">Cell junction</location>
        <location evidence="6 7">Focal adhesion</location>
    </subcellularLocation>
    <subcellularLocation>
        <location evidence="1">Cell membrane</location>
        <topology evidence="1">Peripheral membrane protein</topology>
        <orientation evidence="2">Cytoplasmic side</orientation>
    </subcellularLocation>
    <subcellularLocation>
        <location evidence="2">Cytoplasm</location>
        <location evidence="2">Myofibril</location>
        <location evidence="2">Sarcomere</location>
    </subcellularLocation>
    <subcellularLocation>
        <location evidence="6">Cell projection</location>
        <location evidence="6">Lamellipodium</location>
    </subcellularLocation>
    <subcellularLocation>
        <location evidence="2">Cytoplasm</location>
    </subcellularLocation>
    <subcellularLocation>
        <location evidence="2">Nucleus</location>
    </subcellularLocation>
    <subcellularLocation>
        <location evidence="2">Cytoplasm</location>
        <location evidence="2">Cytoskeleton</location>
        <location evidence="2">Microtubule organizing center</location>
        <location evidence="2">Centrosome</location>
    </subcellularLocation>
    <subcellularLocation>
        <location evidence="2">Cytoplasm</location>
        <location evidence="2">Cell cortex</location>
    </subcellularLocation>
</comment>
<comment type="tissue specificity">
    <text>Highly expressed in lung, heart, kidney, liver, brain, spleen and skeletal muscle. Weakly expressed in testis.</text>
</comment>
<comment type="domain">
    <text evidence="2">The kinase domain is likely to have lost catalytic activity but retains ATP-binding activity. ATP structurally stabilizes the kinase domain and promotes stability of binding to PARVA as well as focal adhesion stability.</text>
</comment>
<comment type="domain">
    <text evidence="2">The PH-like region is not required for assembly of the IPP complex or for localization of ILK to focal adhesions.</text>
</comment>
<comment type="PTM">
    <text evidence="2">Phosphorylation by PAK1 modulates ILK subcellular location by promoting its nuclear export.</text>
</comment>
<comment type="disruption phenotype">
    <text evidence="8">Conditional knockout in keratinocytes results in a dramatically reduced number of caveolae at the basal plasma membrane with abnormal localization of Cav1 throughout the cytoplasm.</text>
</comment>
<comment type="similarity">
    <text evidence="9">Belongs to the protein kinase superfamily. TKL Ser/Thr protein kinase family.</text>
</comment>
<comment type="caution">
    <text evidence="2">Was originally thought to act as a serine/threonine-protein kinase. Now thought to be a pseudokinase which does not have kinase activity and which functions solely as a scaffold protein.</text>
</comment>
<name>ILK_MOUSE</name>
<evidence type="ECO:0000250" key="1"/>
<evidence type="ECO:0000250" key="2">
    <source>
        <dbReference type="UniProtKB" id="Q13418"/>
    </source>
</evidence>
<evidence type="ECO:0000250" key="3">
    <source>
        <dbReference type="UniProtKB" id="Q99J82"/>
    </source>
</evidence>
<evidence type="ECO:0000255" key="4">
    <source>
        <dbReference type="PROSITE-ProRule" id="PRU00159"/>
    </source>
</evidence>
<evidence type="ECO:0000269" key="5">
    <source>
    </source>
</evidence>
<evidence type="ECO:0000269" key="6">
    <source>
    </source>
</evidence>
<evidence type="ECO:0000269" key="7">
    <source>
    </source>
</evidence>
<evidence type="ECO:0000269" key="8">
    <source>
    </source>
</evidence>
<evidence type="ECO:0000305" key="9"/>
<evidence type="ECO:0000312" key="10">
    <source>
        <dbReference type="MGI" id="MGI:1195267"/>
    </source>
</evidence>
<evidence type="ECO:0007744" key="11">
    <source>
    </source>
</evidence>
<gene>
    <name evidence="10" type="primary">Ilk</name>
    <name evidence="2" type="synonym">ILK1</name>
    <name evidence="2" type="synonym">ILK2</name>
</gene>
<keyword id="KW-0007">Acetylation</keyword>
<keyword id="KW-0040">ANK repeat</keyword>
<keyword id="KW-0067">ATP-binding</keyword>
<keyword id="KW-0965">Cell junction</keyword>
<keyword id="KW-1003">Cell membrane</keyword>
<keyword id="KW-0966">Cell projection</keyword>
<keyword id="KW-0963">Cytoplasm</keyword>
<keyword id="KW-0206">Cytoskeleton</keyword>
<keyword id="KW-0460">Magnesium</keyword>
<keyword id="KW-0472">Membrane</keyword>
<keyword id="KW-0479">Metal-binding</keyword>
<keyword id="KW-0547">Nucleotide-binding</keyword>
<keyword id="KW-0539">Nucleus</keyword>
<keyword id="KW-0597">Phosphoprotein</keyword>
<keyword id="KW-1185">Reference proteome</keyword>
<keyword id="KW-0677">Repeat</keyword>
<reference key="1">
    <citation type="journal article" date="1997" name="Biochim. Biophys. Acta">
        <title>Identification and characterization of a mouse protein kinase that is highly homologous to human integrin-linked kinase.</title>
        <authorList>
            <person name="Li F."/>
            <person name="Liu J."/>
            <person name="Mayne R."/>
            <person name="Wu C."/>
        </authorList>
    </citation>
    <scope>NUCLEOTIDE SEQUENCE [MRNA]</scope>
    <source>
        <strain>BALB/cJ</strain>
        <tissue>Heart</tissue>
    </source>
</reference>
<reference key="2">
    <citation type="journal article" date="2004" name="Genome Res.">
        <title>The status, quality, and expansion of the NIH full-length cDNA project: the Mammalian Gene Collection (MGC).</title>
        <authorList>
            <consortium name="The MGC Project Team"/>
        </authorList>
    </citation>
    <scope>NUCLEOTIDE SEQUENCE [LARGE SCALE MRNA]</scope>
    <source>
        <strain>FVB/N</strain>
        <tissue>Mammary tumor</tissue>
    </source>
</reference>
<reference key="3">
    <citation type="journal article" date="2006" name="J. Biol. Chem.">
        <title>Oligomerizing potential of a focal adhesion LIM protein Hic-5 organizing a nuclear-cytoplasmic shuttling complex.</title>
        <authorList>
            <person name="Mori K."/>
            <person name="Asakawa M."/>
            <person name="Hayashi M."/>
            <person name="Imura M."/>
            <person name="Ohki T."/>
            <person name="Hirao E."/>
            <person name="Kim-Kaneyama J.-R."/>
            <person name="Nose K."/>
            <person name="Shibanuma M."/>
        </authorList>
    </citation>
    <scope>INTERACTION WITH TGFB1I1</scope>
</reference>
<reference key="4">
    <citation type="journal article" date="2008" name="FEBS Lett.">
        <title>Affixin activates Rac1 via betaPIX in C2C12 myoblast.</title>
        <authorList>
            <person name="Matsuda C."/>
            <person name="Kameyama K."/>
            <person name="Suzuki A."/>
            <person name="Mishima W."/>
            <person name="Yamaji S."/>
            <person name="Okamoto H."/>
            <person name="Nishino I."/>
            <person name="Hayashi Y.K."/>
        </authorList>
    </citation>
    <scope>SUBCELLULAR LOCATION</scope>
</reference>
<reference key="5">
    <citation type="journal article" date="2008" name="Genes Dev.">
        <title>Kindlin-2 controls bidirectional signaling of integrins.</title>
        <authorList>
            <person name="Montanez E."/>
            <person name="Ussar S."/>
            <person name="Schifferer M."/>
            <person name="Bosl M."/>
            <person name="Zent R."/>
            <person name="Moser M."/>
            <person name="Fassler R."/>
        </authorList>
    </citation>
    <scope>SUBCELLULAR LOCATION</scope>
    <scope>INTERACTION WITH FERMT2</scope>
</reference>
<reference key="6">
    <citation type="journal article" date="2010" name="Cell">
        <title>A tissue-specific atlas of mouse protein phosphorylation and expression.</title>
        <authorList>
            <person name="Huttlin E.L."/>
            <person name="Jedrychowski M.P."/>
            <person name="Elias J.E."/>
            <person name="Goswami T."/>
            <person name="Rad R."/>
            <person name="Beausoleil S.A."/>
            <person name="Villen J."/>
            <person name="Haas W."/>
            <person name="Sowa M.E."/>
            <person name="Gygi S.P."/>
        </authorList>
    </citation>
    <scope>IDENTIFICATION BY MASS SPECTROMETRY [LARGE SCALE ANALYSIS]</scope>
    <source>
        <tissue>Brain</tissue>
        <tissue>Brown adipose tissue</tissue>
        <tissue>Heart</tissue>
        <tissue>Kidney</tissue>
        <tissue>Liver</tissue>
        <tissue>Lung</tissue>
        <tissue>Pancreas</tissue>
        <tissue>Spleen</tissue>
        <tissue>Testis</tissue>
    </source>
</reference>
<reference key="7">
    <citation type="journal article" date="2010" name="Dev. Cell">
        <title>Integrin-linked kinase controls microtubule dynamics required for plasma membrane targeting of caveolae.</title>
        <authorList>
            <person name="Wickstroem S.A."/>
            <person name="Lange A."/>
            <person name="Hess M.W."/>
            <person name="Polleux J."/>
            <person name="Spatz J.P."/>
            <person name="Krueger M."/>
            <person name="Pfaller K."/>
            <person name="Lambacher A."/>
            <person name="Bloch W."/>
            <person name="Mann M."/>
            <person name="Huber L.A."/>
            <person name="Faessler R."/>
        </authorList>
    </citation>
    <scope>FUNCTION</scope>
    <scope>INTERACTION WITH IQGAP1</scope>
    <scope>DISRUPTION PHENOTYPE</scope>
</reference>
<reference key="8">
    <citation type="journal article" date="2013" name="Mol. Cell">
        <title>SIRT5-mediated lysine desuccinylation impacts diverse metabolic pathways.</title>
        <authorList>
            <person name="Park J."/>
            <person name="Chen Y."/>
            <person name="Tishkoff D.X."/>
            <person name="Peng C."/>
            <person name="Tan M."/>
            <person name="Dai L."/>
            <person name="Xie Z."/>
            <person name="Zhang Y."/>
            <person name="Zwaans B.M."/>
            <person name="Skinner M.E."/>
            <person name="Lombard D.B."/>
            <person name="Zhao Y."/>
        </authorList>
    </citation>
    <scope>ACETYLATION [LARGE SCALE ANALYSIS] AT LYS-426</scope>
    <scope>IDENTIFICATION BY MASS SPECTROMETRY [LARGE SCALE ANALYSIS]</scope>
    <source>
        <tissue>Embryonic fibroblast</tissue>
    </source>
</reference>
<proteinExistence type="evidence at protein level"/>
<dbReference type="EMBL" id="U94479">
    <property type="protein sequence ID" value="AAB94646.1"/>
    <property type="molecule type" value="mRNA"/>
</dbReference>
<dbReference type="EMBL" id="BC003737">
    <property type="protein sequence ID" value="AAH03737.1"/>
    <property type="molecule type" value="mRNA"/>
</dbReference>
<dbReference type="CCDS" id="CCDS21659.1"/>
<dbReference type="RefSeq" id="NP_001155196.1">
    <property type="nucleotide sequence ID" value="NM_001161724.1"/>
</dbReference>
<dbReference type="RefSeq" id="NP_034692.2">
    <property type="nucleotide sequence ID" value="NM_010562.2"/>
</dbReference>
<dbReference type="BMRB" id="O55222"/>
<dbReference type="SMR" id="O55222"/>
<dbReference type="BioGRID" id="200649">
    <property type="interactions" value="18"/>
</dbReference>
<dbReference type="CORUM" id="O55222"/>
<dbReference type="DIP" id="DIP-41971N"/>
<dbReference type="FunCoup" id="O55222">
    <property type="interactions" value="1975"/>
</dbReference>
<dbReference type="IntAct" id="O55222">
    <property type="interactions" value="49"/>
</dbReference>
<dbReference type="MINT" id="O55222"/>
<dbReference type="STRING" id="10090.ENSMUSP00000033182"/>
<dbReference type="GlyGen" id="O55222">
    <property type="glycosylation" value="1 site, 1 O-linked glycan (1 site)"/>
</dbReference>
<dbReference type="iPTMnet" id="O55222"/>
<dbReference type="PhosphoSitePlus" id="O55222"/>
<dbReference type="SwissPalm" id="O55222"/>
<dbReference type="jPOST" id="O55222"/>
<dbReference type="PaxDb" id="10090-ENSMUSP00000033182"/>
<dbReference type="PeptideAtlas" id="O55222"/>
<dbReference type="ProteomicsDB" id="269477"/>
<dbReference type="Pumba" id="O55222"/>
<dbReference type="Antibodypedia" id="23909">
    <property type="antibodies" value="824 antibodies from 43 providers"/>
</dbReference>
<dbReference type="DNASU" id="16202"/>
<dbReference type="Ensembl" id="ENSMUST00000033182.10">
    <property type="protein sequence ID" value="ENSMUSP00000033182.4"/>
    <property type="gene ID" value="ENSMUSG00000030890.17"/>
</dbReference>
<dbReference type="Ensembl" id="ENSMUST00000163389.9">
    <property type="protein sequence ID" value="ENSMUSP00000130341.2"/>
    <property type="gene ID" value="ENSMUSG00000030890.17"/>
</dbReference>
<dbReference type="GeneID" id="16202"/>
<dbReference type="KEGG" id="mmu:16202"/>
<dbReference type="UCSC" id="uc009izb.2">
    <property type="organism name" value="mouse"/>
</dbReference>
<dbReference type="AGR" id="MGI:1195267"/>
<dbReference type="CTD" id="3611"/>
<dbReference type="MGI" id="MGI:1195267">
    <property type="gene designation" value="Ilk"/>
</dbReference>
<dbReference type="VEuPathDB" id="HostDB:ENSMUSG00000030890"/>
<dbReference type="eggNOG" id="KOG0195">
    <property type="taxonomic scope" value="Eukaryota"/>
</dbReference>
<dbReference type="GeneTree" id="ENSGT00940000155956"/>
<dbReference type="HOGENOM" id="CLU_000288_7_5_1"/>
<dbReference type="InParanoid" id="O55222"/>
<dbReference type="OMA" id="CREGNAM"/>
<dbReference type="OrthoDB" id="6718656at2759"/>
<dbReference type="PhylomeDB" id="O55222"/>
<dbReference type="TreeFam" id="TF315194"/>
<dbReference type="BRENDA" id="2.7.10.2">
    <property type="organism ID" value="3474"/>
</dbReference>
<dbReference type="Reactome" id="R-MMU-446343">
    <property type="pathway name" value="Localization of the PINCH-ILK-PARVIN complex to focal adhesions"/>
</dbReference>
<dbReference type="Reactome" id="R-MMU-446353">
    <property type="pathway name" value="Cell-extracellular matrix interactions"/>
</dbReference>
<dbReference type="BioGRID-ORCS" id="16202">
    <property type="hits" value="13 hits in 83 CRISPR screens"/>
</dbReference>
<dbReference type="ChiTaRS" id="Ilk">
    <property type="organism name" value="mouse"/>
</dbReference>
<dbReference type="PRO" id="PR:O55222"/>
<dbReference type="Proteomes" id="UP000000589">
    <property type="component" value="Chromosome 7"/>
</dbReference>
<dbReference type="RNAct" id="O55222">
    <property type="molecule type" value="protein"/>
</dbReference>
<dbReference type="Bgee" id="ENSMUSG00000030890">
    <property type="expression patterns" value="Expressed in placenta labyrinth and 275 other cell types or tissues"/>
</dbReference>
<dbReference type="ExpressionAtlas" id="O55222">
    <property type="expression patterns" value="baseline and differential"/>
</dbReference>
<dbReference type="GO" id="GO:0015629">
    <property type="term" value="C:actin cytoskeleton"/>
    <property type="evidence" value="ECO:0007669"/>
    <property type="project" value="Ensembl"/>
</dbReference>
<dbReference type="GO" id="GO:0005938">
    <property type="term" value="C:cell cortex"/>
    <property type="evidence" value="ECO:0007669"/>
    <property type="project" value="UniProtKB-SubCell"/>
</dbReference>
<dbReference type="GO" id="GO:0005813">
    <property type="term" value="C:centrosome"/>
    <property type="evidence" value="ECO:0007669"/>
    <property type="project" value="UniProtKB-SubCell"/>
</dbReference>
<dbReference type="GO" id="GO:0000785">
    <property type="term" value="C:chromatin"/>
    <property type="evidence" value="ECO:0000250"/>
    <property type="project" value="UniProtKB"/>
</dbReference>
<dbReference type="GO" id="GO:0005737">
    <property type="term" value="C:cytoplasm"/>
    <property type="evidence" value="ECO:0000250"/>
    <property type="project" value="UniProtKB"/>
</dbReference>
<dbReference type="GO" id="GO:0005829">
    <property type="term" value="C:cytosol"/>
    <property type="evidence" value="ECO:0007669"/>
    <property type="project" value="Ensembl"/>
</dbReference>
<dbReference type="GO" id="GO:0005925">
    <property type="term" value="C:focal adhesion"/>
    <property type="evidence" value="ECO:0000314"/>
    <property type="project" value="MGI"/>
</dbReference>
<dbReference type="GO" id="GO:0030027">
    <property type="term" value="C:lamellipodium"/>
    <property type="evidence" value="ECO:0000314"/>
    <property type="project" value="UniProtKB"/>
</dbReference>
<dbReference type="GO" id="GO:0005654">
    <property type="term" value="C:nucleoplasm"/>
    <property type="evidence" value="ECO:0007669"/>
    <property type="project" value="Ensembl"/>
</dbReference>
<dbReference type="GO" id="GO:0005634">
    <property type="term" value="C:nucleus"/>
    <property type="evidence" value="ECO:0000250"/>
    <property type="project" value="UniProtKB"/>
</dbReference>
<dbReference type="GO" id="GO:0005886">
    <property type="term" value="C:plasma membrane"/>
    <property type="evidence" value="ECO:0007669"/>
    <property type="project" value="UniProtKB-SubCell"/>
</dbReference>
<dbReference type="GO" id="GO:0030017">
    <property type="term" value="C:sarcomere"/>
    <property type="evidence" value="ECO:0007669"/>
    <property type="project" value="UniProtKB-SubCell"/>
</dbReference>
<dbReference type="GO" id="GO:0005524">
    <property type="term" value="F:ATP binding"/>
    <property type="evidence" value="ECO:0000250"/>
    <property type="project" value="UniProtKB"/>
</dbReference>
<dbReference type="GO" id="GO:0005178">
    <property type="term" value="F:integrin binding"/>
    <property type="evidence" value="ECO:0000250"/>
    <property type="project" value="UniProtKB"/>
</dbReference>
<dbReference type="GO" id="GO:0000287">
    <property type="term" value="F:magnesium ion binding"/>
    <property type="evidence" value="ECO:0000250"/>
    <property type="project" value="UniProtKB"/>
</dbReference>
<dbReference type="GO" id="GO:0004672">
    <property type="term" value="F:protein kinase activity"/>
    <property type="evidence" value="ECO:0007669"/>
    <property type="project" value="InterPro"/>
</dbReference>
<dbReference type="GO" id="GO:0019901">
    <property type="term" value="F:protein kinase binding"/>
    <property type="evidence" value="ECO:0007669"/>
    <property type="project" value="Ensembl"/>
</dbReference>
<dbReference type="GO" id="GO:0001658">
    <property type="term" value="P:branching involved in ureteric bud morphogenesis"/>
    <property type="evidence" value="ECO:0000314"/>
    <property type="project" value="MGI"/>
</dbReference>
<dbReference type="GO" id="GO:0070836">
    <property type="term" value="P:caveola assembly"/>
    <property type="evidence" value="ECO:0000315"/>
    <property type="project" value="UniProtKB"/>
</dbReference>
<dbReference type="GO" id="GO:0000902">
    <property type="term" value="P:cell morphogenesis"/>
    <property type="evidence" value="ECO:0007669"/>
    <property type="project" value="Ensembl"/>
</dbReference>
<dbReference type="GO" id="GO:0008283">
    <property type="term" value="P:cell population proliferation"/>
    <property type="evidence" value="ECO:0000315"/>
    <property type="project" value="MGI"/>
</dbReference>
<dbReference type="GO" id="GO:0030030">
    <property type="term" value="P:cell projection organization"/>
    <property type="evidence" value="ECO:0000315"/>
    <property type="project" value="MGI"/>
</dbReference>
<dbReference type="GO" id="GO:0045197">
    <property type="term" value="P:establishment or maintenance of epithelial cell apical/basal polarity"/>
    <property type="evidence" value="ECO:0000315"/>
    <property type="project" value="MGI"/>
</dbReference>
<dbReference type="GO" id="GO:0010761">
    <property type="term" value="P:fibroblast migration"/>
    <property type="evidence" value="ECO:0000315"/>
    <property type="project" value="MGI"/>
</dbReference>
<dbReference type="GO" id="GO:0007229">
    <property type="term" value="P:integrin-mediated signaling pathway"/>
    <property type="evidence" value="ECO:0000315"/>
    <property type="project" value="BHF-UCL"/>
</dbReference>
<dbReference type="GO" id="GO:0007052">
    <property type="term" value="P:mitotic spindle organization"/>
    <property type="evidence" value="ECO:0007669"/>
    <property type="project" value="Ensembl"/>
</dbReference>
<dbReference type="GO" id="GO:0022011">
    <property type="term" value="P:myelination in peripheral nervous system"/>
    <property type="evidence" value="ECO:0000315"/>
    <property type="project" value="MGI"/>
</dbReference>
<dbReference type="GO" id="GO:2000178">
    <property type="term" value="P:negative regulation of neural precursor cell proliferation"/>
    <property type="evidence" value="ECO:0000315"/>
    <property type="project" value="MGI"/>
</dbReference>
<dbReference type="GO" id="GO:0021675">
    <property type="term" value="P:nerve development"/>
    <property type="evidence" value="ECO:0000315"/>
    <property type="project" value="MGI"/>
</dbReference>
<dbReference type="GO" id="GO:0061351">
    <property type="term" value="P:neural precursor cell proliferation"/>
    <property type="evidence" value="ECO:0000315"/>
    <property type="project" value="MGI"/>
</dbReference>
<dbReference type="GO" id="GO:0003151">
    <property type="term" value="P:outflow tract morphogenesis"/>
    <property type="evidence" value="ECO:0000315"/>
    <property type="project" value="CACAO"/>
</dbReference>
<dbReference type="GO" id="GO:0043491">
    <property type="term" value="P:phosphatidylinositol 3-kinase/protein kinase B signal transduction"/>
    <property type="evidence" value="ECO:0000315"/>
    <property type="project" value="MGI"/>
</dbReference>
<dbReference type="GO" id="GO:0030513">
    <property type="term" value="P:positive regulation of BMP signaling pathway"/>
    <property type="evidence" value="ECO:0000315"/>
    <property type="project" value="BHF-UCL"/>
</dbReference>
<dbReference type="GO" id="GO:0043123">
    <property type="term" value="P:positive regulation of canonical NF-kappaB signal transduction"/>
    <property type="evidence" value="ECO:0007669"/>
    <property type="project" value="Ensembl"/>
</dbReference>
<dbReference type="GO" id="GO:0090263">
    <property type="term" value="P:positive regulation of canonical Wnt signaling pathway"/>
    <property type="evidence" value="ECO:0007669"/>
    <property type="project" value="Ensembl"/>
</dbReference>
<dbReference type="GO" id="GO:0008284">
    <property type="term" value="P:positive regulation of cell population proliferation"/>
    <property type="evidence" value="ECO:0000315"/>
    <property type="project" value="MGI"/>
</dbReference>
<dbReference type="GO" id="GO:0045893">
    <property type="term" value="P:positive regulation of DNA-templated transcription"/>
    <property type="evidence" value="ECO:0007669"/>
    <property type="project" value="Ensembl"/>
</dbReference>
<dbReference type="GO" id="GO:0045669">
    <property type="term" value="P:positive regulation of osteoblast differentiation"/>
    <property type="evidence" value="ECO:0000315"/>
    <property type="project" value="BHF-UCL"/>
</dbReference>
<dbReference type="GO" id="GO:1900026">
    <property type="term" value="P:positive regulation of substrate adhesion-dependent cell spreading"/>
    <property type="evidence" value="ECO:0007669"/>
    <property type="project" value="Ensembl"/>
</dbReference>
<dbReference type="GO" id="GO:0072697">
    <property type="term" value="P:protein localization to cell cortex"/>
    <property type="evidence" value="ECO:0000315"/>
    <property type="project" value="UniProtKB"/>
</dbReference>
<dbReference type="GO" id="GO:0014044">
    <property type="term" value="P:Schwann cell development"/>
    <property type="evidence" value="ECO:0000315"/>
    <property type="project" value="MGI"/>
</dbReference>
<dbReference type="GO" id="GO:0034446">
    <property type="term" value="P:substrate adhesion-dependent cell spreading"/>
    <property type="evidence" value="ECO:0007669"/>
    <property type="project" value="Ensembl"/>
</dbReference>
<dbReference type="GO" id="GO:0033209">
    <property type="term" value="P:tumor necrosis factor-mediated signaling pathway"/>
    <property type="evidence" value="ECO:0007669"/>
    <property type="project" value="Ensembl"/>
</dbReference>
<dbReference type="CDD" id="cd14057">
    <property type="entry name" value="PK_ILK"/>
    <property type="match status" value="1"/>
</dbReference>
<dbReference type="FunFam" id="3.30.200.20:FF:000245">
    <property type="entry name" value="Integrin-linked protein kinase"/>
    <property type="match status" value="1"/>
</dbReference>
<dbReference type="FunFam" id="1.10.510.10:FF:000187">
    <property type="entry name" value="integrin-linked protein kinase"/>
    <property type="match status" value="1"/>
</dbReference>
<dbReference type="FunFam" id="1.25.40.20:FF:000050">
    <property type="entry name" value="integrin-linked protein kinase"/>
    <property type="match status" value="1"/>
</dbReference>
<dbReference type="Gene3D" id="1.25.40.20">
    <property type="entry name" value="Ankyrin repeat-containing domain"/>
    <property type="match status" value="1"/>
</dbReference>
<dbReference type="Gene3D" id="3.30.200.20">
    <property type="entry name" value="Phosphorylase Kinase, domain 1"/>
    <property type="match status" value="1"/>
</dbReference>
<dbReference type="Gene3D" id="1.10.510.10">
    <property type="entry name" value="Transferase(Phosphotransferase) domain 1"/>
    <property type="match status" value="1"/>
</dbReference>
<dbReference type="InterPro" id="IPR002110">
    <property type="entry name" value="Ankyrin_rpt"/>
</dbReference>
<dbReference type="InterPro" id="IPR036770">
    <property type="entry name" value="Ankyrin_rpt-contain_sf"/>
</dbReference>
<dbReference type="InterPro" id="IPR011009">
    <property type="entry name" value="Kinase-like_dom_sf"/>
</dbReference>
<dbReference type="InterPro" id="IPR035692">
    <property type="entry name" value="PK_ILK"/>
</dbReference>
<dbReference type="InterPro" id="IPR000719">
    <property type="entry name" value="Prot_kinase_dom"/>
</dbReference>
<dbReference type="InterPro" id="IPR001245">
    <property type="entry name" value="Ser-Thr/Tyr_kinase_cat_dom"/>
</dbReference>
<dbReference type="InterPro" id="IPR051681">
    <property type="entry name" value="Ser/Thr_Kinases-Pseudokinases"/>
</dbReference>
<dbReference type="PANTHER" id="PTHR44329:SF57">
    <property type="entry name" value="INTEGRIN-LINKED PROTEIN KINASE"/>
    <property type="match status" value="1"/>
</dbReference>
<dbReference type="PANTHER" id="PTHR44329">
    <property type="entry name" value="SERINE/THREONINE-PROTEIN KINASE TNNI3K-RELATED"/>
    <property type="match status" value="1"/>
</dbReference>
<dbReference type="Pfam" id="PF12796">
    <property type="entry name" value="Ank_2"/>
    <property type="match status" value="2"/>
</dbReference>
<dbReference type="Pfam" id="PF07714">
    <property type="entry name" value="PK_Tyr_Ser-Thr"/>
    <property type="match status" value="1"/>
</dbReference>
<dbReference type="PIRSF" id="PIRSF000654">
    <property type="entry name" value="Integrin-linked_kinase"/>
    <property type="match status" value="1"/>
</dbReference>
<dbReference type="SMART" id="SM00248">
    <property type="entry name" value="ANK"/>
    <property type="match status" value="3"/>
</dbReference>
<dbReference type="SUPFAM" id="SSF48403">
    <property type="entry name" value="Ankyrin repeat"/>
    <property type="match status" value="1"/>
</dbReference>
<dbReference type="SUPFAM" id="SSF56112">
    <property type="entry name" value="Protein kinase-like (PK-like)"/>
    <property type="match status" value="1"/>
</dbReference>
<dbReference type="PROSITE" id="PS50297">
    <property type="entry name" value="ANK_REP_REGION"/>
    <property type="match status" value="1"/>
</dbReference>
<dbReference type="PROSITE" id="PS50088">
    <property type="entry name" value="ANK_REPEAT"/>
    <property type="match status" value="3"/>
</dbReference>
<dbReference type="PROSITE" id="PS50011">
    <property type="entry name" value="PROTEIN_KINASE_DOM"/>
    <property type="match status" value="1"/>
</dbReference>
<organism>
    <name type="scientific">Mus musculus</name>
    <name type="common">Mouse</name>
    <dbReference type="NCBI Taxonomy" id="10090"/>
    <lineage>
        <taxon>Eukaryota</taxon>
        <taxon>Metazoa</taxon>
        <taxon>Chordata</taxon>
        <taxon>Craniata</taxon>
        <taxon>Vertebrata</taxon>
        <taxon>Euteleostomi</taxon>
        <taxon>Mammalia</taxon>
        <taxon>Eutheria</taxon>
        <taxon>Euarchontoglires</taxon>
        <taxon>Glires</taxon>
        <taxon>Rodentia</taxon>
        <taxon>Myomorpha</taxon>
        <taxon>Muroidea</taxon>
        <taxon>Muridae</taxon>
        <taxon>Murinae</taxon>
        <taxon>Mus</taxon>
        <taxon>Mus</taxon>
    </lineage>
</organism>
<protein>
    <recommendedName>
        <fullName evidence="9">Scaffold protein ILK</fullName>
    </recommendedName>
    <alternativeName>
        <fullName evidence="2">ILK-1</fullName>
    </alternativeName>
    <alternativeName>
        <fullName evidence="2">ILK-2</fullName>
    </alternativeName>
    <alternativeName>
        <fullName evidence="9">Inactive integrin-linked kinase</fullName>
    </alternativeName>
    <alternativeName>
        <fullName evidence="2">p59ILK</fullName>
    </alternativeName>
</protein>